<keyword id="KW-0067">ATP-binding</keyword>
<keyword id="KW-1003">Cell membrane</keyword>
<keyword id="KW-0472">Membrane</keyword>
<keyword id="KW-0547">Nucleotide-binding</keyword>
<keyword id="KW-0592">Phosphate transport</keyword>
<keyword id="KW-1185">Reference proteome</keyword>
<keyword id="KW-1278">Translocase</keyword>
<keyword id="KW-0813">Transport</keyword>
<evidence type="ECO:0000255" key="1">
    <source>
        <dbReference type="HAMAP-Rule" id="MF_01702"/>
    </source>
</evidence>
<comment type="function">
    <text evidence="1">Part of the ABC transporter complex PstSACB involved in phosphate import. Responsible for energy coupling to the transport system.</text>
</comment>
<comment type="catalytic activity">
    <reaction evidence="1">
        <text>phosphate(out) + ATP + H2O = ADP + 2 phosphate(in) + H(+)</text>
        <dbReference type="Rhea" id="RHEA:24440"/>
        <dbReference type="ChEBI" id="CHEBI:15377"/>
        <dbReference type="ChEBI" id="CHEBI:15378"/>
        <dbReference type="ChEBI" id="CHEBI:30616"/>
        <dbReference type="ChEBI" id="CHEBI:43474"/>
        <dbReference type="ChEBI" id="CHEBI:456216"/>
        <dbReference type="EC" id="7.3.2.1"/>
    </reaction>
</comment>
<comment type="subunit">
    <text evidence="1">The complex is composed of two ATP-binding proteins (PstB), two transmembrane proteins (PstC and PstA) and a solute-binding protein (PstS).</text>
</comment>
<comment type="subcellular location">
    <subcellularLocation>
        <location evidence="1">Cell membrane</location>
        <topology evidence="1">Peripheral membrane protein</topology>
    </subcellularLocation>
</comment>
<comment type="similarity">
    <text evidence="1">Belongs to the ABC transporter superfamily. Phosphate importer (TC 3.A.1.7) family.</text>
</comment>
<proteinExistence type="inferred from homology"/>
<accession>Q8DPB4</accession>
<sequence>MSTYNWDEKHILTFPEEKVALSTKDVHVYYGKNESIKGIDMQFERNKITALIGPSGSGKSTYLRSLNRMNDTIDIAKVTGQILYRGIDVNRPEINVYEMRKHIGMVFQRPNPFAKSIYRNITFAHERAGVKDKQVLDEIVETSLRQAALWDQVKDDLHKSALTLSGGQQQRLCIARAISVKPDILLMDEPASALDPIATMQLEETMFELKKDFTIIIVTHNMQQAARASDYTGFFYLGDLIEYDKTATIFQNAKLQSTNDYVSGHFG</sequence>
<gene>
    <name evidence="1" type="primary">pstB2</name>
    <name type="ordered locus">spr1254</name>
</gene>
<dbReference type="EC" id="7.3.2.1" evidence="1"/>
<dbReference type="EMBL" id="AE007317">
    <property type="protein sequence ID" value="AAL00058.1"/>
    <property type="molecule type" value="Genomic_DNA"/>
</dbReference>
<dbReference type="PIR" id="E98028">
    <property type="entry name" value="E98028"/>
</dbReference>
<dbReference type="RefSeq" id="NP_358847.1">
    <property type="nucleotide sequence ID" value="NC_003098.1"/>
</dbReference>
<dbReference type="SMR" id="Q8DPB4"/>
<dbReference type="STRING" id="171101.spr1254"/>
<dbReference type="KEGG" id="spr:spr1254"/>
<dbReference type="PATRIC" id="fig|171101.6.peg.1360"/>
<dbReference type="eggNOG" id="COG1117">
    <property type="taxonomic scope" value="Bacteria"/>
</dbReference>
<dbReference type="HOGENOM" id="CLU_000604_1_22_9"/>
<dbReference type="Proteomes" id="UP000000586">
    <property type="component" value="Chromosome"/>
</dbReference>
<dbReference type="GO" id="GO:0005886">
    <property type="term" value="C:plasma membrane"/>
    <property type="evidence" value="ECO:0007669"/>
    <property type="project" value="UniProtKB-SubCell"/>
</dbReference>
<dbReference type="GO" id="GO:0005524">
    <property type="term" value="F:ATP binding"/>
    <property type="evidence" value="ECO:0007669"/>
    <property type="project" value="UniProtKB-KW"/>
</dbReference>
<dbReference type="GO" id="GO:0016887">
    <property type="term" value="F:ATP hydrolysis activity"/>
    <property type="evidence" value="ECO:0007669"/>
    <property type="project" value="InterPro"/>
</dbReference>
<dbReference type="GO" id="GO:0015415">
    <property type="term" value="F:ATPase-coupled phosphate ion transmembrane transporter activity"/>
    <property type="evidence" value="ECO:0007669"/>
    <property type="project" value="UniProtKB-EC"/>
</dbReference>
<dbReference type="GO" id="GO:0035435">
    <property type="term" value="P:phosphate ion transmembrane transport"/>
    <property type="evidence" value="ECO:0007669"/>
    <property type="project" value="InterPro"/>
</dbReference>
<dbReference type="CDD" id="cd03260">
    <property type="entry name" value="ABC_PstB_phosphate_transporter"/>
    <property type="match status" value="1"/>
</dbReference>
<dbReference type="Gene3D" id="3.40.50.300">
    <property type="entry name" value="P-loop containing nucleotide triphosphate hydrolases"/>
    <property type="match status" value="1"/>
</dbReference>
<dbReference type="InterPro" id="IPR003593">
    <property type="entry name" value="AAA+_ATPase"/>
</dbReference>
<dbReference type="InterPro" id="IPR003439">
    <property type="entry name" value="ABC_transporter-like_ATP-bd"/>
</dbReference>
<dbReference type="InterPro" id="IPR017871">
    <property type="entry name" value="ABC_transporter-like_CS"/>
</dbReference>
<dbReference type="InterPro" id="IPR027417">
    <property type="entry name" value="P-loop_NTPase"/>
</dbReference>
<dbReference type="InterPro" id="IPR005670">
    <property type="entry name" value="PstB-like"/>
</dbReference>
<dbReference type="NCBIfam" id="TIGR00972">
    <property type="entry name" value="3a0107s01c2"/>
    <property type="match status" value="1"/>
</dbReference>
<dbReference type="PANTHER" id="PTHR43423">
    <property type="entry name" value="ABC TRANSPORTER I FAMILY MEMBER 17"/>
    <property type="match status" value="1"/>
</dbReference>
<dbReference type="PANTHER" id="PTHR43423:SF10">
    <property type="entry name" value="PHOSPHATE IMPORT ATP-BINDING PROTEIN PSTB 2"/>
    <property type="match status" value="1"/>
</dbReference>
<dbReference type="Pfam" id="PF00005">
    <property type="entry name" value="ABC_tran"/>
    <property type="match status" value="1"/>
</dbReference>
<dbReference type="SMART" id="SM00382">
    <property type="entry name" value="AAA"/>
    <property type="match status" value="1"/>
</dbReference>
<dbReference type="SUPFAM" id="SSF52540">
    <property type="entry name" value="P-loop containing nucleoside triphosphate hydrolases"/>
    <property type="match status" value="1"/>
</dbReference>
<dbReference type="PROSITE" id="PS00211">
    <property type="entry name" value="ABC_TRANSPORTER_1"/>
    <property type="match status" value="1"/>
</dbReference>
<dbReference type="PROSITE" id="PS50893">
    <property type="entry name" value="ABC_TRANSPORTER_2"/>
    <property type="match status" value="1"/>
</dbReference>
<dbReference type="PROSITE" id="PS51238">
    <property type="entry name" value="PSTB"/>
    <property type="match status" value="1"/>
</dbReference>
<reference key="1">
    <citation type="journal article" date="2001" name="J. Bacteriol.">
        <title>Genome of the bacterium Streptococcus pneumoniae strain R6.</title>
        <authorList>
            <person name="Hoskins J."/>
            <person name="Alborn W.E. Jr."/>
            <person name="Arnold J."/>
            <person name="Blaszczak L.C."/>
            <person name="Burgett S."/>
            <person name="DeHoff B.S."/>
            <person name="Estrem S.T."/>
            <person name="Fritz L."/>
            <person name="Fu D.-J."/>
            <person name="Fuller W."/>
            <person name="Geringer C."/>
            <person name="Gilmour R."/>
            <person name="Glass J.S."/>
            <person name="Khoja H."/>
            <person name="Kraft A.R."/>
            <person name="Lagace R.E."/>
            <person name="LeBlanc D.J."/>
            <person name="Lee L.N."/>
            <person name="Lefkowitz E.J."/>
            <person name="Lu J."/>
            <person name="Matsushima P."/>
            <person name="McAhren S.M."/>
            <person name="McHenney M."/>
            <person name="McLeaster K."/>
            <person name="Mundy C.W."/>
            <person name="Nicas T.I."/>
            <person name="Norris F.H."/>
            <person name="O'Gara M."/>
            <person name="Peery R.B."/>
            <person name="Robertson G.T."/>
            <person name="Rockey P."/>
            <person name="Sun P.-M."/>
            <person name="Winkler M.E."/>
            <person name="Yang Y."/>
            <person name="Young-Bellido M."/>
            <person name="Zhao G."/>
            <person name="Zook C.A."/>
            <person name="Baltz R.H."/>
            <person name="Jaskunas S.R."/>
            <person name="Rosteck P.R. Jr."/>
            <person name="Skatrud P.L."/>
            <person name="Glass J.I."/>
        </authorList>
    </citation>
    <scope>NUCLEOTIDE SEQUENCE [LARGE SCALE GENOMIC DNA]</scope>
    <source>
        <strain>ATCC BAA-255 / R6</strain>
    </source>
</reference>
<protein>
    <recommendedName>
        <fullName evidence="1">Phosphate import ATP-binding protein PstB 2</fullName>
        <ecNumber evidence="1">7.3.2.1</ecNumber>
    </recommendedName>
    <alternativeName>
        <fullName evidence="1">ABC phosphate transporter 2</fullName>
    </alternativeName>
    <alternativeName>
        <fullName evidence="1">Phosphate-transporting ATPase 2</fullName>
    </alternativeName>
</protein>
<name>PSTB2_STRR6</name>
<organism>
    <name type="scientific">Streptococcus pneumoniae (strain ATCC BAA-255 / R6)</name>
    <dbReference type="NCBI Taxonomy" id="171101"/>
    <lineage>
        <taxon>Bacteria</taxon>
        <taxon>Bacillati</taxon>
        <taxon>Bacillota</taxon>
        <taxon>Bacilli</taxon>
        <taxon>Lactobacillales</taxon>
        <taxon>Streptococcaceae</taxon>
        <taxon>Streptococcus</taxon>
    </lineage>
</organism>
<feature type="chain" id="PRO_0000092901" description="Phosphate import ATP-binding protein PstB 2">
    <location>
        <begin position="1"/>
        <end position="267"/>
    </location>
</feature>
<feature type="domain" description="ABC transporter" evidence="1">
    <location>
        <begin position="21"/>
        <end position="262"/>
    </location>
</feature>
<feature type="binding site" evidence="1">
    <location>
        <begin position="53"/>
        <end position="60"/>
    </location>
    <ligand>
        <name>ATP</name>
        <dbReference type="ChEBI" id="CHEBI:30616"/>
    </ligand>
</feature>